<comment type="function">
    <text evidence="1">Allows the formation of correctly charged Gln-tRNA(Gln) through the transamidation of misacylated Glu-tRNA(Gln) in the mitochondria. The reaction takes place in the presence of glutamine and ATP through an activated gamma-phospho-Glu-tRNA(Gln).</text>
</comment>
<comment type="catalytic activity">
    <reaction evidence="1">
        <text>L-glutamyl-tRNA(Gln) + L-glutamine + ATP + H2O = L-glutaminyl-tRNA(Gln) + L-glutamate + ADP + phosphate + H(+)</text>
        <dbReference type="Rhea" id="RHEA:17521"/>
        <dbReference type="Rhea" id="RHEA-COMP:9681"/>
        <dbReference type="Rhea" id="RHEA-COMP:9684"/>
        <dbReference type="ChEBI" id="CHEBI:15377"/>
        <dbReference type="ChEBI" id="CHEBI:15378"/>
        <dbReference type="ChEBI" id="CHEBI:29985"/>
        <dbReference type="ChEBI" id="CHEBI:30616"/>
        <dbReference type="ChEBI" id="CHEBI:43474"/>
        <dbReference type="ChEBI" id="CHEBI:58359"/>
        <dbReference type="ChEBI" id="CHEBI:78520"/>
        <dbReference type="ChEBI" id="CHEBI:78521"/>
        <dbReference type="ChEBI" id="CHEBI:456216"/>
    </reaction>
</comment>
<comment type="subunit">
    <text evidence="1">Subunit of the heterotrimeric GatCAB amidotransferase (AdT) complex, composed of A, B and C subunits.</text>
</comment>
<comment type="subcellular location">
    <subcellularLocation>
        <location evidence="1">Mitochondrion</location>
    </subcellularLocation>
</comment>
<comment type="similarity">
    <text evidence="1">Belongs to the GatB/GatE family. GatB subfamily.</text>
</comment>
<comment type="sequence caution" evidence="3">
    <conflict type="erroneous initiation">
        <sequence resource="EMBL-CDS" id="EER37166"/>
    </conflict>
    <text>Extended N-terminus.</text>
</comment>
<organism>
    <name type="scientific">Ajellomyces capsulatus (strain H143)</name>
    <name type="common">Darling's disease fungus</name>
    <name type="synonym">Histoplasma capsulatum</name>
    <dbReference type="NCBI Taxonomy" id="544712"/>
    <lineage>
        <taxon>Eukaryota</taxon>
        <taxon>Fungi</taxon>
        <taxon>Dikarya</taxon>
        <taxon>Ascomycota</taxon>
        <taxon>Pezizomycotina</taxon>
        <taxon>Eurotiomycetes</taxon>
        <taxon>Eurotiomycetidae</taxon>
        <taxon>Onygenales</taxon>
        <taxon>Ajellomycetaceae</taxon>
        <taxon>Histoplasma</taxon>
    </lineage>
</organism>
<gene>
    <name type="ORF">HCDG_08617</name>
</gene>
<accession>C6HRN2</accession>
<proteinExistence type="inferred from homology"/>
<keyword id="KW-0067">ATP-binding</keyword>
<keyword id="KW-0436">Ligase</keyword>
<keyword id="KW-0496">Mitochondrion</keyword>
<keyword id="KW-0547">Nucleotide-binding</keyword>
<keyword id="KW-0648">Protein biosynthesis</keyword>
<keyword id="KW-1185">Reference proteome</keyword>
<keyword id="KW-0809">Transit peptide</keyword>
<feature type="transit peptide" description="Mitochondrion" evidence="1">
    <location>
        <begin position="1"/>
        <end position="12"/>
    </location>
</feature>
<feature type="chain" id="PRO_0000413239" description="Glutamyl-tRNA(Gln) amidotransferase subunit B, mitochondrial">
    <location>
        <begin position="13"/>
        <end position="574"/>
    </location>
</feature>
<feature type="region of interest" description="Disordered" evidence="2">
    <location>
        <begin position="34"/>
        <end position="62"/>
    </location>
</feature>
<sequence length="574" mass="63667">MIRQFVSHRGIPCYRLAVRRVELTEPFHHPSPWPLGRKNWSTSDEAKSKRAAMRKGGAPPPEHEDWELTVGIEIHAQLDTDAKLFSSASAALDDVPNSNIALFDIALPGSQPLFQPSTLIPAIRAAIALNCDVQRVSRFDRKHYFYQDQPAGYQITQYYEPYAKNGSIWLGAHDGIAKEDGEGVQIGIKQIQMEQDTAKSQELPSSTYLLDFNRVSRPLIEIITLPQIHSATTAAACVRKIQAILQSVGAVTTGMEMGGLRADVNVSVRKRSEAAGDHQYDGVAGLGQRTEIKNLSSFKAVEYAIIAERDRQIAVLKAGGTIQGETRGWTLGSTETRKLRGKEGEVDYRYMPDPDLGPVIIGDDVISDLRRNIPGLPDELLQMLVQDPKYGLSTVDAKTLIELDDGQRLEYYQDAVEILTTLQPDLSADFSAGKVVGNWVLHELGGLLTKSSAHWDSQRVPAQSLAEIINLLSRKNITSSSAKSLLAMAFDGDKRSISQIVEDKNLLFQSLSRHEYLALAEEVMRQNPKMVSEIREKAQLGKMGWLVGQIKRIGDPNRVEAQKAEEILRELILK</sequence>
<dbReference type="EC" id="6.3.5.-" evidence="1"/>
<dbReference type="EMBL" id="GG692436">
    <property type="protein sequence ID" value="EER37166.1"/>
    <property type="status" value="ALT_INIT"/>
    <property type="molecule type" value="Genomic_DNA"/>
</dbReference>
<dbReference type="SMR" id="C6HRN2"/>
<dbReference type="STRING" id="544712.C6HRN2"/>
<dbReference type="eggNOG" id="KOG2438">
    <property type="taxonomic scope" value="Eukaryota"/>
</dbReference>
<dbReference type="HOGENOM" id="CLU_019240_4_1_1"/>
<dbReference type="OrthoDB" id="4762at299071"/>
<dbReference type="Proteomes" id="UP000002624">
    <property type="component" value="Unassembled WGS sequence"/>
</dbReference>
<dbReference type="GO" id="GO:0030956">
    <property type="term" value="C:glutamyl-tRNA(Gln) amidotransferase complex"/>
    <property type="evidence" value="ECO:0007669"/>
    <property type="project" value="UniProtKB-UniRule"/>
</dbReference>
<dbReference type="GO" id="GO:0005739">
    <property type="term" value="C:mitochondrion"/>
    <property type="evidence" value="ECO:0007669"/>
    <property type="project" value="UniProtKB-SubCell"/>
</dbReference>
<dbReference type="GO" id="GO:0005524">
    <property type="term" value="F:ATP binding"/>
    <property type="evidence" value="ECO:0007669"/>
    <property type="project" value="UniProtKB-KW"/>
</dbReference>
<dbReference type="GO" id="GO:0050567">
    <property type="term" value="F:glutaminyl-tRNA synthase (glutamine-hydrolyzing) activity"/>
    <property type="evidence" value="ECO:0007669"/>
    <property type="project" value="UniProtKB-UniRule"/>
</dbReference>
<dbReference type="GO" id="GO:0070681">
    <property type="term" value="P:glutaminyl-tRNAGln biosynthesis via transamidation"/>
    <property type="evidence" value="ECO:0007669"/>
    <property type="project" value="UniProtKB-UniRule"/>
</dbReference>
<dbReference type="GO" id="GO:0032543">
    <property type="term" value="P:mitochondrial translation"/>
    <property type="evidence" value="ECO:0007669"/>
    <property type="project" value="UniProtKB-UniRule"/>
</dbReference>
<dbReference type="HAMAP" id="MF_00121">
    <property type="entry name" value="GatB"/>
    <property type="match status" value="1"/>
</dbReference>
<dbReference type="InterPro" id="IPR017959">
    <property type="entry name" value="Asn/Gln-tRNA_amidoTrfase_suB/E"/>
</dbReference>
<dbReference type="InterPro" id="IPR006075">
    <property type="entry name" value="Asn/Gln-tRNA_Trfase_suB/E_cat"/>
</dbReference>
<dbReference type="InterPro" id="IPR018027">
    <property type="entry name" value="Asn/Gln_amidotransferase"/>
</dbReference>
<dbReference type="InterPro" id="IPR003789">
    <property type="entry name" value="Asn/Gln_tRNA_amidoTrase-B-like"/>
</dbReference>
<dbReference type="InterPro" id="IPR004413">
    <property type="entry name" value="GatB"/>
</dbReference>
<dbReference type="InterPro" id="IPR017958">
    <property type="entry name" value="Gln-tRNA_amidoTrfase_suB_CS"/>
</dbReference>
<dbReference type="InterPro" id="IPR014746">
    <property type="entry name" value="Gln_synth/guanido_kin_cat_dom"/>
</dbReference>
<dbReference type="NCBIfam" id="TIGR00133">
    <property type="entry name" value="gatB"/>
    <property type="match status" value="1"/>
</dbReference>
<dbReference type="NCBIfam" id="NF004012">
    <property type="entry name" value="PRK05477.1-2"/>
    <property type="match status" value="1"/>
</dbReference>
<dbReference type="PANTHER" id="PTHR11659">
    <property type="entry name" value="GLUTAMYL-TRNA GLN AMIDOTRANSFERASE SUBUNIT B MITOCHONDRIAL AND PROKARYOTIC PET112-RELATED"/>
    <property type="match status" value="1"/>
</dbReference>
<dbReference type="PANTHER" id="PTHR11659:SF0">
    <property type="entry name" value="GLUTAMYL-TRNA(GLN) AMIDOTRANSFERASE SUBUNIT B, MITOCHONDRIAL"/>
    <property type="match status" value="1"/>
</dbReference>
<dbReference type="Pfam" id="PF02934">
    <property type="entry name" value="GatB_N"/>
    <property type="match status" value="1"/>
</dbReference>
<dbReference type="Pfam" id="PF02637">
    <property type="entry name" value="GatB_Yqey"/>
    <property type="match status" value="1"/>
</dbReference>
<dbReference type="SMART" id="SM00845">
    <property type="entry name" value="GatB_Yqey"/>
    <property type="match status" value="1"/>
</dbReference>
<dbReference type="SUPFAM" id="SSF89095">
    <property type="entry name" value="GatB/YqeY motif"/>
    <property type="match status" value="1"/>
</dbReference>
<dbReference type="SUPFAM" id="SSF55931">
    <property type="entry name" value="Glutamine synthetase/guanido kinase"/>
    <property type="match status" value="1"/>
</dbReference>
<dbReference type="PROSITE" id="PS01234">
    <property type="entry name" value="GATB"/>
    <property type="match status" value="1"/>
</dbReference>
<reference key="1">
    <citation type="submission" date="2009-05" db="EMBL/GenBank/DDBJ databases">
        <title>The genome sequence of Ajellomyces capsulatus strain H143.</title>
        <authorList>
            <person name="Champion M."/>
            <person name="Cuomo C.A."/>
            <person name="Ma L.-J."/>
            <person name="Henn M.R."/>
            <person name="Sil A."/>
            <person name="Goldman B."/>
            <person name="Young S.K."/>
            <person name="Kodira C.D."/>
            <person name="Zeng Q."/>
            <person name="Koehrsen M."/>
            <person name="Alvarado L."/>
            <person name="Berlin A.M."/>
            <person name="Borenstein D."/>
            <person name="Chen Z."/>
            <person name="Engels R."/>
            <person name="Freedman E."/>
            <person name="Gellesch M."/>
            <person name="Goldberg J."/>
            <person name="Griggs A."/>
            <person name="Gujja S."/>
            <person name="Heiman D.I."/>
            <person name="Hepburn T.A."/>
            <person name="Howarth C."/>
            <person name="Jen D."/>
            <person name="Larson L."/>
            <person name="Lewis B."/>
            <person name="Mehta T."/>
            <person name="Park D."/>
            <person name="Pearson M."/>
            <person name="Roberts A."/>
            <person name="Saif S."/>
            <person name="Shea T.D."/>
            <person name="Shenoy N."/>
            <person name="Sisk P."/>
            <person name="Stolte C."/>
            <person name="Sykes S."/>
            <person name="Walk T."/>
            <person name="White J."/>
            <person name="Yandava C."/>
            <person name="Klein B."/>
            <person name="McEwen J.G."/>
            <person name="Puccia R."/>
            <person name="Goldman G.H."/>
            <person name="Felipe M.S."/>
            <person name="Nino-Vega G."/>
            <person name="San-Blas G."/>
            <person name="Taylor J.W."/>
            <person name="Mendoza L."/>
            <person name="Galagan J.E."/>
            <person name="Nusbaum C."/>
            <person name="Birren B.W."/>
        </authorList>
    </citation>
    <scope>NUCLEOTIDE SEQUENCE [LARGE SCALE GENOMIC DNA]</scope>
    <source>
        <strain>H143</strain>
    </source>
</reference>
<evidence type="ECO:0000255" key="1">
    <source>
        <dbReference type="HAMAP-Rule" id="MF_03147"/>
    </source>
</evidence>
<evidence type="ECO:0000256" key="2">
    <source>
        <dbReference type="SAM" id="MobiDB-lite"/>
    </source>
</evidence>
<evidence type="ECO:0000305" key="3"/>
<name>GATB_AJECH</name>
<protein>
    <recommendedName>
        <fullName evidence="1">Glutamyl-tRNA(Gln) amidotransferase subunit B, mitochondrial</fullName>
        <shortName evidence="1">Glu-AdT subunit B</shortName>
        <ecNumber evidence="1">6.3.5.-</ecNumber>
    </recommendedName>
</protein>